<accession>P37269</accession>
<accession>Q31LQ5</accession>
<reference key="1">
    <citation type="journal article" date="1992" name="FEBS Lett.">
        <title>Molecular cloning and expression in Escherichia coli of a cyanobacterial gene coding for phytoene synthase, a carotenoid biosynthesis enzyme.</title>
        <authorList>
            <person name="Chamovitz D."/>
            <person name="Misawa D."/>
            <person name="Sandmann N."/>
            <person name="Hirshberg J."/>
        </authorList>
    </citation>
    <scope>NUCLEOTIDE SEQUENCE [GENOMIC DNA]</scope>
    <scope>FUNCTION</scope>
    <scope>CATALYTIC ACTIVITY</scope>
</reference>
<reference key="2">
    <citation type="submission" date="2005-08" db="EMBL/GenBank/DDBJ databases">
        <title>Complete sequence of chromosome 1 of Synechococcus elongatus PCC 7942.</title>
        <authorList>
            <consortium name="US DOE Joint Genome Institute"/>
            <person name="Copeland A."/>
            <person name="Lucas S."/>
            <person name="Lapidus A."/>
            <person name="Barry K."/>
            <person name="Detter J.C."/>
            <person name="Glavina T."/>
            <person name="Hammon N."/>
            <person name="Israni S."/>
            <person name="Pitluck S."/>
            <person name="Schmutz J."/>
            <person name="Larimer F."/>
            <person name="Land M."/>
            <person name="Kyrpides N."/>
            <person name="Lykidis A."/>
            <person name="Golden S."/>
            <person name="Richardson P."/>
        </authorList>
    </citation>
    <scope>NUCLEOTIDE SEQUENCE [LARGE SCALE GENOMIC DNA]</scope>
    <source>
        <strain>ATCC 33912 / PCC 7942 / FACHB-805</strain>
    </source>
</reference>
<proteinExistence type="evidence at protein level"/>
<feature type="chain" id="PRO_0000067437" description="15-cis-phytoene synthase">
    <location>
        <begin position="1"/>
        <end position="308"/>
    </location>
</feature>
<feature type="sequence conflict" description="In Ref. 1." evidence="4" ref="1">
    <original>G</original>
    <variation>C</variation>
    <location>
        <position position="249"/>
    </location>
</feature>
<feature type="sequence conflict" description="In Ref. 1." evidence="4" ref="1">
    <original>RQ</original>
    <variation>E</variation>
    <location>
        <begin position="251"/>
        <end position="252"/>
    </location>
</feature>
<protein>
    <recommendedName>
        <fullName evidence="4">15-cis-phytoene synthase</fullName>
        <shortName>PSase</shortName>
        <ecNumber evidence="3">2.5.1.32</ecNumber>
    </recommendedName>
</protein>
<gene>
    <name type="primary">crtB</name>
    <name type="synonym">pys</name>
    <name type="ordered locus">Synpcc7942_1984</name>
</gene>
<name>CRTB_SYNE7</name>
<sequence>MLQMIPARPSRALASLSEAYEECRQITARYAKTFYLGTLLMPEAKRQAIWAIYVWCRRTDELVDGPQAAQTNFATLDAWERRLERLFAGEPEDDCDVALVDTLARYPLDIQPFRDMIEGQRMDLLQNRYSTFEDLYTYCYRVAGTVGLMSQPVMGIESTNSRAPWDPTTPPDPTQEALALGIANQLTNILRDVGEDARRGRIYLPQEELAQFNYSEQDLFNGVIDDRWRAFMQFQLDRARDYFEQAERGIRQLSHDARWPVWASLMLYREILDVIEQNNYDVFRKRAYVPTWRKLCSLPVAMLRATVL</sequence>
<keyword id="KW-0125">Carotenoid biosynthesis</keyword>
<keyword id="KW-0460">Magnesium</keyword>
<keyword id="KW-0464">Manganese</keyword>
<keyword id="KW-0479">Metal-binding</keyword>
<keyword id="KW-1185">Reference proteome</keyword>
<keyword id="KW-0808">Transferase</keyword>
<organism>
    <name type="scientific">Synechococcus elongatus (strain ATCC 33912 / PCC 7942 / FACHB-805)</name>
    <name type="common">Anacystis nidulans R2</name>
    <dbReference type="NCBI Taxonomy" id="1140"/>
    <lineage>
        <taxon>Bacteria</taxon>
        <taxon>Bacillati</taxon>
        <taxon>Cyanobacteriota</taxon>
        <taxon>Cyanophyceae</taxon>
        <taxon>Synechococcales</taxon>
        <taxon>Synechococcaceae</taxon>
        <taxon>Synechococcus</taxon>
    </lineage>
</organism>
<evidence type="ECO:0000250" key="1"/>
<evidence type="ECO:0000250" key="2">
    <source>
        <dbReference type="UniProtKB" id="D5KXJ0"/>
    </source>
</evidence>
<evidence type="ECO:0000269" key="3">
    <source>
    </source>
</evidence>
<evidence type="ECO:0000305" key="4"/>
<dbReference type="EC" id="2.5.1.32" evidence="3"/>
<dbReference type="EMBL" id="X63873">
    <property type="protein sequence ID" value="CAA45350.1"/>
    <property type="molecule type" value="Genomic_DNA"/>
</dbReference>
<dbReference type="EMBL" id="CP000100">
    <property type="protein sequence ID" value="ABB58014.1"/>
    <property type="molecule type" value="Genomic_DNA"/>
</dbReference>
<dbReference type="PIR" id="S20383">
    <property type="entry name" value="S20383"/>
</dbReference>
<dbReference type="RefSeq" id="WP_011244422.1">
    <property type="nucleotide sequence ID" value="NZ_JACJTX010000001.1"/>
</dbReference>
<dbReference type="SMR" id="P37269"/>
<dbReference type="STRING" id="1140.Synpcc7942_1984"/>
<dbReference type="PaxDb" id="1140-Synpcc7942_1984"/>
<dbReference type="DNASU" id="3774171"/>
<dbReference type="GeneID" id="72430857"/>
<dbReference type="KEGG" id="syf:Synpcc7942_1984"/>
<dbReference type="eggNOG" id="COG1562">
    <property type="taxonomic scope" value="Bacteria"/>
</dbReference>
<dbReference type="HOGENOM" id="CLU_037269_1_3_3"/>
<dbReference type="OrthoDB" id="9787280at2"/>
<dbReference type="BioCyc" id="MetaCyc:SYNPCC7942_1984-MONOMER"/>
<dbReference type="BioCyc" id="SYNEL:SYNPCC7942_1984-MONOMER"/>
<dbReference type="UniPathway" id="UPA00799"/>
<dbReference type="Proteomes" id="UP000889800">
    <property type="component" value="Chromosome"/>
</dbReference>
<dbReference type="GO" id="GO:0046905">
    <property type="term" value="F:15-cis-phytoene synthase activity"/>
    <property type="evidence" value="ECO:0000314"/>
    <property type="project" value="UniProtKB"/>
</dbReference>
<dbReference type="GO" id="GO:0004311">
    <property type="term" value="F:geranylgeranyl diphosphate synthase activity"/>
    <property type="evidence" value="ECO:0007669"/>
    <property type="project" value="InterPro"/>
</dbReference>
<dbReference type="GO" id="GO:0046872">
    <property type="term" value="F:metal ion binding"/>
    <property type="evidence" value="ECO:0007669"/>
    <property type="project" value="UniProtKB-KW"/>
</dbReference>
<dbReference type="GO" id="GO:0051996">
    <property type="term" value="F:squalene synthase [NAD(P)H] activity"/>
    <property type="evidence" value="ECO:0007669"/>
    <property type="project" value="InterPro"/>
</dbReference>
<dbReference type="GO" id="GO:0016117">
    <property type="term" value="P:carotenoid biosynthetic process"/>
    <property type="evidence" value="ECO:0000314"/>
    <property type="project" value="UniProtKB"/>
</dbReference>
<dbReference type="CDD" id="cd00683">
    <property type="entry name" value="Trans_IPPS_HH"/>
    <property type="match status" value="1"/>
</dbReference>
<dbReference type="FunFam" id="1.10.600.10:FF:000004">
    <property type="entry name" value="Phytoene synthase chloroplastic"/>
    <property type="match status" value="1"/>
</dbReference>
<dbReference type="Gene3D" id="1.10.600.10">
    <property type="entry name" value="Farnesyl Diphosphate Synthase"/>
    <property type="match status" value="1"/>
</dbReference>
<dbReference type="InterPro" id="IPR008949">
    <property type="entry name" value="Isoprenoid_synthase_dom_sf"/>
</dbReference>
<dbReference type="InterPro" id="IPR054866">
    <property type="entry name" value="PhytoSynCyanob"/>
</dbReference>
<dbReference type="InterPro" id="IPR002060">
    <property type="entry name" value="Squ/phyt_synthse"/>
</dbReference>
<dbReference type="InterPro" id="IPR019845">
    <property type="entry name" value="Squalene/phytoene_synthase_CS"/>
</dbReference>
<dbReference type="InterPro" id="IPR044843">
    <property type="entry name" value="Trans_IPPS_bact-type"/>
</dbReference>
<dbReference type="InterPro" id="IPR033904">
    <property type="entry name" value="Trans_IPPS_HH"/>
</dbReference>
<dbReference type="NCBIfam" id="NF045686">
    <property type="entry name" value="PhytoSynCyanob"/>
    <property type="match status" value="1"/>
</dbReference>
<dbReference type="PANTHER" id="PTHR31480">
    <property type="entry name" value="BIFUNCTIONAL LYCOPENE CYCLASE/PHYTOENE SYNTHASE"/>
    <property type="match status" value="1"/>
</dbReference>
<dbReference type="Pfam" id="PF00494">
    <property type="entry name" value="SQS_PSY"/>
    <property type="match status" value="1"/>
</dbReference>
<dbReference type="SFLD" id="SFLDG01212">
    <property type="entry name" value="Phytoene_synthase_like"/>
    <property type="match status" value="1"/>
</dbReference>
<dbReference type="SFLD" id="SFLDG01018">
    <property type="entry name" value="Squalene/Phytoene_Synthase_Lik"/>
    <property type="match status" value="1"/>
</dbReference>
<dbReference type="SUPFAM" id="SSF48576">
    <property type="entry name" value="Terpenoid synthases"/>
    <property type="match status" value="1"/>
</dbReference>
<dbReference type="PROSITE" id="PS01044">
    <property type="entry name" value="SQUALEN_PHYTOEN_SYN_1"/>
    <property type="match status" value="1"/>
</dbReference>
<dbReference type="PROSITE" id="PS01045">
    <property type="entry name" value="SQUALEN_PHYTOEN_SYN_2"/>
    <property type="match status" value="1"/>
</dbReference>
<comment type="function">
    <text evidence="3">Involved in the biosynthesis of carotenoids. Catalyzes the condensation of two molecules of geranylgeranyl diphosphate (GGPP) to give prephytoene diphosphate (PPPP) and the subsequent rearrangement of the cyclopropylcarbinyl intermediate to yield 15-cis-phytoene.</text>
</comment>
<comment type="catalytic activity">
    <reaction evidence="3">
        <text>2 (2E,6E,10E)-geranylgeranyl diphosphate = 15-cis-phytoene + 2 diphosphate</text>
        <dbReference type="Rhea" id="RHEA:34475"/>
        <dbReference type="ChEBI" id="CHEBI:27787"/>
        <dbReference type="ChEBI" id="CHEBI:33019"/>
        <dbReference type="ChEBI" id="CHEBI:58756"/>
        <dbReference type="EC" id="2.5.1.32"/>
    </reaction>
</comment>
<comment type="cofactor">
    <cofactor evidence="1">
        <name>ATP</name>
        <dbReference type="ChEBI" id="CHEBI:30616"/>
    </cofactor>
    <text evidence="1">ATP is required for the transferase activity but it does not seem to be hydrolyzed during the reaction.</text>
</comment>
<comment type="cofactor">
    <cofactor evidence="1">
        <name>Mn(2+)</name>
        <dbReference type="ChEBI" id="CHEBI:29035"/>
    </cofactor>
    <cofactor evidence="1">
        <name>Mg(2+)</name>
        <dbReference type="ChEBI" id="CHEBI:18420"/>
    </cofactor>
</comment>
<comment type="pathway">
    <text>Carotenoid biosynthesis; phytoene biosynthesis.</text>
</comment>
<comment type="similarity">
    <text evidence="4">Belongs to the phytoene/squalene synthase family.</text>
</comment>
<comment type="caution">
    <text evidence="2">The enzyme produces 15-cis-phytoene. The conversion to all-trans-phytoene is due to photoisomerisation.</text>
</comment>